<proteinExistence type="inferred from homology"/>
<evidence type="ECO:0000255" key="1">
    <source>
        <dbReference type="HAMAP-Rule" id="MF_00817"/>
    </source>
</evidence>
<organism>
    <name type="scientific">Escherichia coli O9:H4 (strain HS)</name>
    <dbReference type="NCBI Taxonomy" id="331112"/>
    <lineage>
        <taxon>Bacteria</taxon>
        <taxon>Pseudomonadati</taxon>
        <taxon>Pseudomonadota</taxon>
        <taxon>Gammaproteobacteria</taxon>
        <taxon>Enterobacterales</taxon>
        <taxon>Enterobacteriaceae</taxon>
        <taxon>Escherichia</taxon>
    </lineage>
</organism>
<reference key="1">
    <citation type="journal article" date="2008" name="J. Bacteriol.">
        <title>The pangenome structure of Escherichia coli: comparative genomic analysis of E. coli commensal and pathogenic isolates.</title>
        <authorList>
            <person name="Rasko D.A."/>
            <person name="Rosovitz M.J."/>
            <person name="Myers G.S.A."/>
            <person name="Mongodin E.F."/>
            <person name="Fricke W.F."/>
            <person name="Gajer P."/>
            <person name="Crabtree J."/>
            <person name="Sebaihia M."/>
            <person name="Thomson N.R."/>
            <person name="Chaudhuri R."/>
            <person name="Henderson I.R."/>
            <person name="Sperandio V."/>
            <person name="Ravel J."/>
        </authorList>
    </citation>
    <scope>NUCLEOTIDE SEQUENCE [LARGE SCALE GENOMIC DNA]</scope>
    <source>
        <strain>HS</strain>
    </source>
</reference>
<protein>
    <recommendedName>
        <fullName evidence="1">NADPH-dependent 7-cyano-7-deazaguanine reductase</fullName>
        <ecNumber evidence="1">1.7.1.13</ecNumber>
    </recommendedName>
    <alternativeName>
        <fullName evidence="1">7-cyano-7-carbaguanine reductase</fullName>
    </alternativeName>
    <alternativeName>
        <fullName evidence="1">NADPH-dependent nitrile oxidoreductase</fullName>
    </alternativeName>
    <alternativeName>
        <fullName evidence="1">PreQ(0) reductase</fullName>
    </alternativeName>
</protein>
<gene>
    <name evidence="1" type="primary">queF</name>
    <name type="ordered locus">EcHS_A2938</name>
</gene>
<feature type="chain" id="PRO_1000062339" description="NADPH-dependent 7-cyano-7-deazaguanine reductase">
    <location>
        <begin position="1"/>
        <end position="282"/>
    </location>
</feature>
<feature type="active site" description="Thioimide intermediate" evidence="1">
    <location>
        <position position="190"/>
    </location>
</feature>
<feature type="active site" description="Proton donor" evidence="1">
    <location>
        <position position="197"/>
    </location>
</feature>
<feature type="binding site" evidence="1">
    <location>
        <begin position="88"/>
        <end position="90"/>
    </location>
    <ligand>
        <name>substrate</name>
    </ligand>
</feature>
<feature type="binding site" evidence="1">
    <location>
        <begin position="90"/>
        <end position="91"/>
    </location>
    <ligand>
        <name>NADPH</name>
        <dbReference type="ChEBI" id="CHEBI:57783"/>
    </ligand>
</feature>
<feature type="binding site" evidence="1">
    <location>
        <begin position="229"/>
        <end position="230"/>
    </location>
    <ligand>
        <name>substrate</name>
    </ligand>
</feature>
<feature type="binding site" evidence="1">
    <location>
        <begin position="258"/>
        <end position="259"/>
    </location>
    <ligand>
        <name>NADPH</name>
        <dbReference type="ChEBI" id="CHEBI:57783"/>
    </ligand>
</feature>
<sequence>MSSYANHQALAGLTLGKSTDYRDTYDASLLQGVPRSLNRDPLGLKADNLPFHGTDIWTLYELSWLNAKGLPQVAVGHVELDYTSVNLIESKSFKLYLNSFNQTRFNNWDEVRQTLERDLSTCAQGKISVALYRLDELEGQPIGHFNGTCIDDQDITIDNYEFTTDYLENATCGEKVVEETLVSHLLKSNCLITHQPDWGSIQIQYRGRQIDREKLLRYLVSFRHHNEFHEQCVERIFNDLLRFCQPEKLSVYARYTRRGGLDINPWRSNSDFVPSTTRLVRQ</sequence>
<accession>A8A3S9</accession>
<name>QUEF_ECOHS</name>
<comment type="function">
    <text evidence="1">Catalyzes the NADPH-dependent reduction of 7-cyano-7-deazaguanine (preQ0) to 7-aminomethyl-7-deazaguanine (preQ1).</text>
</comment>
<comment type="catalytic activity">
    <reaction evidence="1">
        <text>7-aminomethyl-7-carbaguanine + 2 NADP(+) = 7-cyano-7-deazaguanine + 2 NADPH + 3 H(+)</text>
        <dbReference type="Rhea" id="RHEA:13409"/>
        <dbReference type="ChEBI" id="CHEBI:15378"/>
        <dbReference type="ChEBI" id="CHEBI:45075"/>
        <dbReference type="ChEBI" id="CHEBI:57783"/>
        <dbReference type="ChEBI" id="CHEBI:58349"/>
        <dbReference type="ChEBI" id="CHEBI:58703"/>
        <dbReference type="EC" id="1.7.1.13"/>
    </reaction>
</comment>
<comment type="pathway">
    <text evidence="1">tRNA modification; tRNA-queuosine biosynthesis.</text>
</comment>
<comment type="subunit">
    <text evidence="1">Homodimer.</text>
</comment>
<comment type="subcellular location">
    <subcellularLocation>
        <location evidence="1">Cytoplasm</location>
    </subcellularLocation>
</comment>
<comment type="similarity">
    <text evidence="1">Belongs to the GTP cyclohydrolase I family. QueF type 2 subfamily.</text>
</comment>
<keyword id="KW-0963">Cytoplasm</keyword>
<keyword id="KW-0521">NADP</keyword>
<keyword id="KW-0560">Oxidoreductase</keyword>
<keyword id="KW-0671">Queuosine biosynthesis</keyword>
<dbReference type="EC" id="1.7.1.13" evidence="1"/>
<dbReference type="EMBL" id="CP000802">
    <property type="protein sequence ID" value="ABV07183.1"/>
    <property type="molecule type" value="Genomic_DNA"/>
</dbReference>
<dbReference type="RefSeq" id="WP_000100420.1">
    <property type="nucleotide sequence ID" value="NC_009800.1"/>
</dbReference>
<dbReference type="SMR" id="A8A3S9"/>
<dbReference type="GeneID" id="93779204"/>
<dbReference type="KEGG" id="ecx:EcHS_A2938"/>
<dbReference type="HOGENOM" id="CLU_054738_0_0_6"/>
<dbReference type="UniPathway" id="UPA00392"/>
<dbReference type="GO" id="GO:0005737">
    <property type="term" value="C:cytoplasm"/>
    <property type="evidence" value="ECO:0007669"/>
    <property type="project" value="UniProtKB-SubCell"/>
</dbReference>
<dbReference type="GO" id="GO:0033739">
    <property type="term" value="F:preQ1 synthase activity"/>
    <property type="evidence" value="ECO:0007669"/>
    <property type="project" value="UniProtKB-UniRule"/>
</dbReference>
<dbReference type="GO" id="GO:0008616">
    <property type="term" value="P:queuosine biosynthetic process"/>
    <property type="evidence" value="ECO:0007669"/>
    <property type="project" value="UniProtKB-UniRule"/>
</dbReference>
<dbReference type="GO" id="GO:0006400">
    <property type="term" value="P:tRNA modification"/>
    <property type="evidence" value="ECO:0007669"/>
    <property type="project" value="UniProtKB-UniRule"/>
</dbReference>
<dbReference type="FunFam" id="3.30.1130.10:FF:000004">
    <property type="entry name" value="NADPH-dependent 7-cyano-7-deazaguanine reductase"/>
    <property type="match status" value="1"/>
</dbReference>
<dbReference type="FunFam" id="3.30.1130.10:FF:000006">
    <property type="entry name" value="NADPH-dependent 7-cyano-7-deazaguanine reductase"/>
    <property type="match status" value="1"/>
</dbReference>
<dbReference type="Gene3D" id="3.30.1130.10">
    <property type="match status" value="2"/>
</dbReference>
<dbReference type="HAMAP" id="MF_00817">
    <property type="entry name" value="QueF_type2"/>
    <property type="match status" value="1"/>
</dbReference>
<dbReference type="InterPro" id="IPR043133">
    <property type="entry name" value="GTP-CH-I_C/QueF"/>
</dbReference>
<dbReference type="InterPro" id="IPR050084">
    <property type="entry name" value="NADPH_dep_7-cyano-7-deazaG_red"/>
</dbReference>
<dbReference type="InterPro" id="IPR029500">
    <property type="entry name" value="QueF"/>
</dbReference>
<dbReference type="InterPro" id="IPR029139">
    <property type="entry name" value="QueF_N"/>
</dbReference>
<dbReference type="InterPro" id="IPR016428">
    <property type="entry name" value="QueF_type2"/>
</dbReference>
<dbReference type="NCBIfam" id="TIGR03138">
    <property type="entry name" value="QueF"/>
    <property type="match status" value="1"/>
</dbReference>
<dbReference type="PANTHER" id="PTHR34354">
    <property type="entry name" value="NADPH-DEPENDENT 7-CYANO-7-DEAZAGUANINE REDUCTASE"/>
    <property type="match status" value="1"/>
</dbReference>
<dbReference type="PANTHER" id="PTHR34354:SF1">
    <property type="entry name" value="NADPH-DEPENDENT 7-CYANO-7-DEAZAGUANINE REDUCTASE"/>
    <property type="match status" value="1"/>
</dbReference>
<dbReference type="Pfam" id="PF14489">
    <property type="entry name" value="QueF"/>
    <property type="match status" value="1"/>
</dbReference>
<dbReference type="Pfam" id="PF14819">
    <property type="entry name" value="QueF_N"/>
    <property type="match status" value="1"/>
</dbReference>
<dbReference type="PIRSF" id="PIRSF004750">
    <property type="entry name" value="Nitrile_oxidored_YqcD_prd"/>
    <property type="match status" value="1"/>
</dbReference>
<dbReference type="SUPFAM" id="SSF55620">
    <property type="entry name" value="Tetrahydrobiopterin biosynthesis enzymes-like"/>
    <property type="match status" value="1"/>
</dbReference>